<evidence type="ECO:0000250" key="1"/>
<evidence type="ECO:0000255" key="2"/>
<evidence type="ECO:0000255" key="3">
    <source>
        <dbReference type="PROSITE-ProRule" id="PRU00794"/>
    </source>
</evidence>
<evidence type="ECO:0000305" key="4"/>
<evidence type="ECO:0007744" key="5">
    <source>
    </source>
</evidence>
<name>IDI2_ARATH</name>
<protein>
    <recommendedName>
        <fullName>Isopentenyl-diphosphate Delta-isomerase II, chloroplastic</fullName>
        <ecNumber>5.3.3.2</ecNumber>
    </recommendedName>
    <alternativeName>
        <fullName>Isopentenyl pyrophosphate isomerase II</fullName>
        <shortName>IPP isomerase II</shortName>
    </alternativeName>
</protein>
<feature type="transit peptide" description="Chloroplast" evidence="2 5">
    <location>
        <begin position="1"/>
        <end position="45"/>
    </location>
</feature>
<feature type="chain" id="PRO_0000205233" description="Isopentenyl-diphosphate Delta-isomerase II, chloroplastic">
    <location>
        <begin position="46"/>
        <end position="284"/>
    </location>
</feature>
<feature type="domain" description="Nudix hydrolase" evidence="3">
    <location>
        <begin position="102"/>
        <end position="254"/>
    </location>
</feature>
<feature type="short sequence motif" description="Nudix box">
    <location>
        <begin position="140"/>
        <end position="170"/>
    </location>
</feature>
<feature type="active site" evidence="1">
    <location>
        <position position="139"/>
    </location>
</feature>
<feature type="active site" evidence="1">
    <location>
        <position position="201"/>
    </location>
</feature>
<feature type="binding site" evidence="1">
    <location>
        <position position="88"/>
    </location>
    <ligand>
        <name>substrate</name>
    </ligand>
</feature>
<feature type="binding site" evidence="1">
    <location>
        <position position="92"/>
    </location>
    <ligand>
        <name>Mg(2+)</name>
        <dbReference type="ChEBI" id="CHEBI:18420"/>
    </ligand>
</feature>
<feature type="binding site" evidence="1">
    <location>
        <position position="104"/>
    </location>
    <ligand>
        <name>Mg(2+)</name>
        <dbReference type="ChEBI" id="CHEBI:18420"/>
    </ligand>
</feature>
<feature type="binding site" evidence="1">
    <location>
        <position position="123"/>
    </location>
    <ligand>
        <name>substrate</name>
    </ligand>
</feature>
<feature type="binding site" evidence="1">
    <location>
        <position position="127"/>
    </location>
    <ligand>
        <name>substrate</name>
    </ligand>
</feature>
<feature type="binding site" evidence="1">
    <location>
        <position position="140"/>
    </location>
    <ligand>
        <name>substrate</name>
    </ligand>
</feature>
<feature type="binding site" evidence="1">
    <location>
        <position position="199"/>
    </location>
    <ligand>
        <name>Mg(2+)</name>
        <dbReference type="ChEBI" id="CHEBI:18420"/>
    </ligand>
</feature>
<feature type="binding site" evidence="1">
    <location>
        <position position="201"/>
    </location>
    <ligand>
        <name>Mg(2+)</name>
        <dbReference type="ChEBI" id="CHEBI:18420"/>
    </ligand>
</feature>
<feature type="modified residue" description="N-acetylalanine" evidence="5">
    <location>
        <position position="46"/>
    </location>
</feature>
<sequence length="284" mass="32607">MSASSLFNLPLIRLRSLALSSSFSSFRFAHRPLSSISPRKLPNFRAFSGTAMTDTKDAGMDAVQRRLMFEDECILVDETDRVVGHDSKYNCHLMENIEAKNLLHRAFSVFLFNSKYELLLQQRSNTKVTFPLVWTNTCCSHPLYRESELIQDNALGVRNAAQRKLLDELGIVAEDVPVDEFTPLGRMLYKAPSDGKWGEHELDYLLFIVRDVKVQPNPDEVAEIKYVSREELKELVKKADAGEEGLKLSPWFRLVVDNFLMKWWDHVEKGTLVEAIDMKTIHKL</sequence>
<gene>
    <name type="primary">IPP2</name>
    <name type="ordered locus">At3g02780</name>
    <name type="ORF">F13E7.28</name>
</gene>
<accession>Q42553</accession>
<dbReference type="EC" id="5.3.3.2"/>
<dbReference type="EMBL" id="U49259">
    <property type="protein sequence ID" value="AAC49920.1"/>
    <property type="molecule type" value="mRNA"/>
</dbReference>
<dbReference type="EMBL" id="AC018363">
    <property type="protein sequence ID" value="AAF26982.1"/>
    <property type="molecule type" value="Genomic_DNA"/>
</dbReference>
<dbReference type="EMBL" id="CP002686">
    <property type="protein sequence ID" value="AEE73859.1"/>
    <property type="molecule type" value="Genomic_DNA"/>
</dbReference>
<dbReference type="EMBL" id="AF428343">
    <property type="protein sequence ID" value="AAL16273.1"/>
    <property type="molecule type" value="mRNA"/>
</dbReference>
<dbReference type="EMBL" id="AY127023">
    <property type="protein sequence ID" value="AAM83247.1"/>
    <property type="molecule type" value="mRNA"/>
</dbReference>
<dbReference type="EMBL" id="AY143845">
    <property type="protein sequence ID" value="AAN28784.1"/>
    <property type="molecule type" value="mRNA"/>
</dbReference>
<dbReference type="PIR" id="S71370">
    <property type="entry name" value="S71370"/>
</dbReference>
<dbReference type="RefSeq" id="NP_186927.1">
    <property type="nucleotide sequence ID" value="NM_111146.4"/>
</dbReference>
<dbReference type="SMR" id="Q42553"/>
<dbReference type="BioGRID" id="6293">
    <property type="interactions" value="1"/>
</dbReference>
<dbReference type="FunCoup" id="Q42553">
    <property type="interactions" value="2970"/>
</dbReference>
<dbReference type="IntAct" id="Q42553">
    <property type="interactions" value="1"/>
</dbReference>
<dbReference type="STRING" id="3702.Q42553"/>
<dbReference type="iPTMnet" id="Q42553"/>
<dbReference type="MetOSite" id="Q42553"/>
<dbReference type="PaxDb" id="3702-AT3G02780.1"/>
<dbReference type="ProteomicsDB" id="232199"/>
<dbReference type="DNASU" id="820960"/>
<dbReference type="EnsemblPlants" id="AT3G02780.1">
    <property type="protein sequence ID" value="AT3G02780.1"/>
    <property type="gene ID" value="AT3G02780"/>
</dbReference>
<dbReference type="GeneID" id="820960"/>
<dbReference type="Gramene" id="AT3G02780.1">
    <property type="protein sequence ID" value="AT3G02780.1"/>
    <property type="gene ID" value="AT3G02780"/>
</dbReference>
<dbReference type="KEGG" id="ath:AT3G02780"/>
<dbReference type="Araport" id="AT3G02780"/>
<dbReference type="TAIR" id="AT3G02780">
    <property type="gene designation" value="IPP2"/>
</dbReference>
<dbReference type="eggNOG" id="KOG0142">
    <property type="taxonomic scope" value="Eukaryota"/>
</dbReference>
<dbReference type="HOGENOM" id="CLU_060552_0_0_1"/>
<dbReference type="InParanoid" id="Q42553"/>
<dbReference type="OrthoDB" id="510307at2759"/>
<dbReference type="PhylomeDB" id="Q42553"/>
<dbReference type="BioCyc" id="ARA:AT3G02780-MONOMER"/>
<dbReference type="BioCyc" id="MetaCyc:AT3G02780-MONOMER"/>
<dbReference type="BRENDA" id="5.3.3.2">
    <property type="organism ID" value="399"/>
</dbReference>
<dbReference type="UniPathway" id="UPA00059">
    <property type="reaction ID" value="UER00104"/>
</dbReference>
<dbReference type="UniPathway" id="UPA00668"/>
<dbReference type="PRO" id="PR:Q42553"/>
<dbReference type="Proteomes" id="UP000006548">
    <property type="component" value="Chromosome 3"/>
</dbReference>
<dbReference type="ExpressionAtlas" id="Q42553">
    <property type="expression patterns" value="baseline and differential"/>
</dbReference>
<dbReference type="GO" id="GO:0009507">
    <property type="term" value="C:chloroplast"/>
    <property type="evidence" value="ECO:0007005"/>
    <property type="project" value="TAIR"/>
</dbReference>
<dbReference type="GO" id="GO:0005829">
    <property type="term" value="C:cytosol"/>
    <property type="evidence" value="ECO:0000314"/>
    <property type="project" value="TAIR"/>
</dbReference>
<dbReference type="GO" id="GO:0005739">
    <property type="term" value="C:mitochondrion"/>
    <property type="evidence" value="ECO:0000314"/>
    <property type="project" value="TAIR"/>
</dbReference>
<dbReference type="GO" id="GO:0004452">
    <property type="term" value="F:isopentenyl-diphosphate delta-isomerase activity"/>
    <property type="evidence" value="ECO:0007669"/>
    <property type="project" value="UniProtKB-EC"/>
</dbReference>
<dbReference type="GO" id="GO:0046872">
    <property type="term" value="F:metal ion binding"/>
    <property type="evidence" value="ECO:0007669"/>
    <property type="project" value="UniProtKB-KW"/>
</dbReference>
<dbReference type="GO" id="GO:0015995">
    <property type="term" value="P:chlorophyll biosynthetic process"/>
    <property type="evidence" value="ECO:0007669"/>
    <property type="project" value="UniProtKB-UniPathway"/>
</dbReference>
<dbReference type="GO" id="GO:0050992">
    <property type="term" value="P:dimethylallyl diphosphate biosynthetic process"/>
    <property type="evidence" value="ECO:0007669"/>
    <property type="project" value="UniProtKB-UniPathway"/>
</dbReference>
<dbReference type="GO" id="GO:0009908">
    <property type="term" value="P:flower development"/>
    <property type="evidence" value="ECO:0000315"/>
    <property type="project" value="TAIR"/>
</dbReference>
<dbReference type="GO" id="GO:0008299">
    <property type="term" value="P:isoprenoid biosynthetic process"/>
    <property type="evidence" value="ECO:0007669"/>
    <property type="project" value="UniProtKB-KW"/>
</dbReference>
<dbReference type="GO" id="GO:0015979">
    <property type="term" value="P:photosynthesis"/>
    <property type="evidence" value="ECO:0007669"/>
    <property type="project" value="UniProtKB-KW"/>
</dbReference>
<dbReference type="CDD" id="cd02885">
    <property type="entry name" value="NUDIX_IPP_Isomerase"/>
    <property type="match status" value="1"/>
</dbReference>
<dbReference type="FunFam" id="3.90.79.10:FF:000025">
    <property type="entry name" value="isopentenyl-diphosphate Delta-isomerase I"/>
    <property type="match status" value="1"/>
</dbReference>
<dbReference type="Gene3D" id="3.90.79.10">
    <property type="entry name" value="Nucleoside Triphosphate Pyrophosphohydrolase"/>
    <property type="match status" value="1"/>
</dbReference>
<dbReference type="InterPro" id="IPR011876">
    <property type="entry name" value="IsopentenylPP_isomerase_typ1"/>
</dbReference>
<dbReference type="InterPro" id="IPR015797">
    <property type="entry name" value="NUDIX_hydrolase-like_dom_sf"/>
</dbReference>
<dbReference type="InterPro" id="IPR000086">
    <property type="entry name" value="NUDIX_hydrolase_dom"/>
</dbReference>
<dbReference type="NCBIfam" id="TIGR02150">
    <property type="entry name" value="IPP_isom_1"/>
    <property type="match status" value="1"/>
</dbReference>
<dbReference type="PANTHER" id="PTHR10885">
    <property type="entry name" value="ISOPENTENYL-DIPHOSPHATE DELTA-ISOMERASE"/>
    <property type="match status" value="1"/>
</dbReference>
<dbReference type="PANTHER" id="PTHR10885:SF19">
    <property type="entry name" value="ISOPENTENYL-DIPHOSPHATE DELTA-ISOMERASE II, CHLOROPLASTIC"/>
    <property type="match status" value="1"/>
</dbReference>
<dbReference type="Pfam" id="PF00293">
    <property type="entry name" value="NUDIX"/>
    <property type="match status" value="1"/>
</dbReference>
<dbReference type="SUPFAM" id="SSF55811">
    <property type="entry name" value="Nudix"/>
    <property type="match status" value="1"/>
</dbReference>
<dbReference type="PROSITE" id="PS51462">
    <property type="entry name" value="NUDIX"/>
    <property type="match status" value="1"/>
</dbReference>
<proteinExistence type="evidence at protein level"/>
<comment type="function">
    <text evidence="1">Catalyzes the 1,3-allylic rearrangement of the homoallylic substrate isopentenyl (IPP) to its highly electrophilic allylic isomer, dimethylallyl diphosphate (DMAPP).</text>
</comment>
<comment type="catalytic activity">
    <reaction>
        <text>isopentenyl diphosphate = dimethylallyl diphosphate</text>
        <dbReference type="Rhea" id="RHEA:23284"/>
        <dbReference type="ChEBI" id="CHEBI:57623"/>
        <dbReference type="ChEBI" id="CHEBI:128769"/>
        <dbReference type="EC" id="5.3.3.2"/>
    </reaction>
</comment>
<comment type="cofactor">
    <cofactor evidence="1">
        <name>Mg(2+)</name>
        <dbReference type="ChEBI" id="CHEBI:18420"/>
    </cofactor>
    <text evidence="1">Binds 1 Mg(2+) ion per subunit.</text>
</comment>
<comment type="pathway">
    <text>Isoprenoid biosynthesis; dimethylallyl diphosphate biosynthesis; dimethylallyl diphosphate from isopentenyl diphosphate: step 1/1.</text>
</comment>
<comment type="pathway">
    <text>Porphyrin-containing compound metabolism; chlorophyll biosynthesis.</text>
</comment>
<comment type="subcellular location">
    <subcellularLocation>
        <location evidence="4">Plastid</location>
        <location evidence="4">Chloroplast</location>
    </subcellularLocation>
</comment>
<comment type="similarity">
    <text evidence="4">Belongs to the IPP isomerase type 1 family.</text>
</comment>
<keyword id="KW-0007">Acetylation</keyword>
<keyword id="KW-0149">Chlorophyll biosynthesis</keyword>
<keyword id="KW-0150">Chloroplast</keyword>
<keyword id="KW-0413">Isomerase</keyword>
<keyword id="KW-0414">Isoprene biosynthesis</keyword>
<keyword id="KW-0460">Magnesium</keyword>
<keyword id="KW-0479">Metal-binding</keyword>
<keyword id="KW-0602">Photosynthesis</keyword>
<keyword id="KW-0934">Plastid</keyword>
<keyword id="KW-1185">Reference proteome</keyword>
<keyword id="KW-0809">Transit peptide</keyword>
<reference key="1">
    <citation type="journal article" date="1998" name="Plant Mol. Biol.">
        <title>Analysis of the isopentenyl diphosphate isomerase gene family from Arabidopsis thaliana.</title>
        <authorList>
            <person name="Campbell M."/>
            <person name="Hahn F.M."/>
            <person name="Poulter C.D."/>
            <person name="Leustek T."/>
        </authorList>
    </citation>
    <scope>NUCLEOTIDE SEQUENCE [MRNA]</scope>
</reference>
<reference key="2">
    <citation type="journal article" date="2000" name="Nature">
        <title>Sequence and analysis of chromosome 3 of the plant Arabidopsis thaliana.</title>
        <authorList>
            <person name="Salanoubat M."/>
            <person name="Lemcke K."/>
            <person name="Rieger M."/>
            <person name="Ansorge W."/>
            <person name="Unseld M."/>
            <person name="Fartmann B."/>
            <person name="Valle G."/>
            <person name="Bloecker H."/>
            <person name="Perez-Alonso M."/>
            <person name="Obermaier B."/>
            <person name="Delseny M."/>
            <person name="Boutry M."/>
            <person name="Grivell L.A."/>
            <person name="Mache R."/>
            <person name="Puigdomenech P."/>
            <person name="De Simone V."/>
            <person name="Choisne N."/>
            <person name="Artiguenave F."/>
            <person name="Robert C."/>
            <person name="Brottier P."/>
            <person name="Wincker P."/>
            <person name="Cattolico L."/>
            <person name="Weissenbach J."/>
            <person name="Saurin W."/>
            <person name="Quetier F."/>
            <person name="Schaefer M."/>
            <person name="Mueller-Auer S."/>
            <person name="Gabel C."/>
            <person name="Fuchs M."/>
            <person name="Benes V."/>
            <person name="Wurmbach E."/>
            <person name="Drzonek H."/>
            <person name="Erfle H."/>
            <person name="Jordan N."/>
            <person name="Bangert S."/>
            <person name="Wiedelmann R."/>
            <person name="Kranz H."/>
            <person name="Voss H."/>
            <person name="Holland R."/>
            <person name="Brandt P."/>
            <person name="Nyakatura G."/>
            <person name="Vezzi A."/>
            <person name="D'Angelo M."/>
            <person name="Pallavicini A."/>
            <person name="Toppo S."/>
            <person name="Simionati B."/>
            <person name="Conrad A."/>
            <person name="Hornischer K."/>
            <person name="Kauer G."/>
            <person name="Loehnert T.-H."/>
            <person name="Nordsiek G."/>
            <person name="Reichelt J."/>
            <person name="Scharfe M."/>
            <person name="Schoen O."/>
            <person name="Bargues M."/>
            <person name="Terol J."/>
            <person name="Climent J."/>
            <person name="Navarro P."/>
            <person name="Collado C."/>
            <person name="Perez-Perez A."/>
            <person name="Ottenwaelder B."/>
            <person name="Duchemin D."/>
            <person name="Cooke R."/>
            <person name="Laudie M."/>
            <person name="Berger-Llauro C."/>
            <person name="Purnelle B."/>
            <person name="Masuy D."/>
            <person name="de Haan M."/>
            <person name="Maarse A.C."/>
            <person name="Alcaraz J.-P."/>
            <person name="Cottet A."/>
            <person name="Casacuberta E."/>
            <person name="Monfort A."/>
            <person name="Argiriou A."/>
            <person name="Flores M."/>
            <person name="Liguori R."/>
            <person name="Vitale D."/>
            <person name="Mannhaupt G."/>
            <person name="Haase D."/>
            <person name="Schoof H."/>
            <person name="Rudd S."/>
            <person name="Zaccaria P."/>
            <person name="Mewes H.-W."/>
            <person name="Mayer K.F.X."/>
            <person name="Kaul S."/>
            <person name="Town C.D."/>
            <person name="Koo H.L."/>
            <person name="Tallon L.J."/>
            <person name="Jenkins J."/>
            <person name="Rooney T."/>
            <person name="Rizzo M."/>
            <person name="Walts A."/>
            <person name="Utterback T."/>
            <person name="Fujii C.Y."/>
            <person name="Shea T.P."/>
            <person name="Creasy T.H."/>
            <person name="Haas B."/>
            <person name="Maiti R."/>
            <person name="Wu D."/>
            <person name="Peterson J."/>
            <person name="Van Aken S."/>
            <person name="Pai G."/>
            <person name="Militscher J."/>
            <person name="Sellers P."/>
            <person name="Gill J.E."/>
            <person name="Feldblyum T.V."/>
            <person name="Preuss D."/>
            <person name="Lin X."/>
            <person name="Nierman W.C."/>
            <person name="Salzberg S.L."/>
            <person name="White O."/>
            <person name="Venter J.C."/>
            <person name="Fraser C.M."/>
            <person name="Kaneko T."/>
            <person name="Nakamura Y."/>
            <person name="Sato S."/>
            <person name="Kato T."/>
            <person name="Asamizu E."/>
            <person name="Sasamoto S."/>
            <person name="Kimura T."/>
            <person name="Idesawa K."/>
            <person name="Kawashima K."/>
            <person name="Kishida Y."/>
            <person name="Kiyokawa C."/>
            <person name="Kohara M."/>
            <person name="Matsumoto M."/>
            <person name="Matsuno A."/>
            <person name="Muraki A."/>
            <person name="Nakayama S."/>
            <person name="Nakazaki N."/>
            <person name="Shinpo S."/>
            <person name="Takeuchi C."/>
            <person name="Wada T."/>
            <person name="Watanabe A."/>
            <person name="Yamada M."/>
            <person name="Yasuda M."/>
            <person name="Tabata S."/>
        </authorList>
    </citation>
    <scope>NUCLEOTIDE SEQUENCE [LARGE SCALE GENOMIC DNA]</scope>
    <source>
        <strain>cv. Columbia</strain>
    </source>
</reference>
<reference key="3">
    <citation type="journal article" date="2017" name="Plant J.">
        <title>Araport11: a complete reannotation of the Arabidopsis thaliana reference genome.</title>
        <authorList>
            <person name="Cheng C.Y."/>
            <person name="Krishnakumar V."/>
            <person name="Chan A.P."/>
            <person name="Thibaud-Nissen F."/>
            <person name="Schobel S."/>
            <person name="Town C.D."/>
        </authorList>
    </citation>
    <scope>GENOME REANNOTATION</scope>
    <source>
        <strain>cv. Columbia</strain>
    </source>
</reference>
<reference key="4">
    <citation type="journal article" date="2003" name="Science">
        <title>Empirical analysis of transcriptional activity in the Arabidopsis genome.</title>
        <authorList>
            <person name="Yamada K."/>
            <person name="Lim J."/>
            <person name="Dale J.M."/>
            <person name="Chen H."/>
            <person name="Shinn P."/>
            <person name="Palm C.J."/>
            <person name="Southwick A.M."/>
            <person name="Wu H.C."/>
            <person name="Kim C.J."/>
            <person name="Nguyen M."/>
            <person name="Pham P.K."/>
            <person name="Cheuk R.F."/>
            <person name="Karlin-Newmann G."/>
            <person name="Liu S.X."/>
            <person name="Lam B."/>
            <person name="Sakano H."/>
            <person name="Wu T."/>
            <person name="Yu G."/>
            <person name="Miranda M."/>
            <person name="Quach H.L."/>
            <person name="Tripp M."/>
            <person name="Chang C.H."/>
            <person name="Lee J.M."/>
            <person name="Toriumi M.J."/>
            <person name="Chan M.M."/>
            <person name="Tang C.C."/>
            <person name="Onodera C.S."/>
            <person name="Deng J.M."/>
            <person name="Akiyama K."/>
            <person name="Ansari Y."/>
            <person name="Arakawa T."/>
            <person name="Banh J."/>
            <person name="Banno F."/>
            <person name="Bowser L."/>
            <person name="Brooks S.Y."/>
            <person name="Carninci P."/>
            <person name="Chao Q."/>
            <person name="Choy N."/>
            <person name="Enju A."/>
            <person name="Goldsmith A.D."/>
            <person name="Gurjal M."/>
            <person name="Hansen N.F."/>
            <person name="Hayashizaki Y."/>
            <person name="Johnson-Hopson C."/>
            <person name="Hsuan V.W."/>
            <person name="Iida K."/>
            <person name="Karnes M."/>
            <person name="Khan S."/>
            <person name="Koesema E."/>
            <person name="Ishida J."/>
            <person name="Jiang P.X."/>
            <person name="Jones T."/>
            <person name="Kawai J."/>
            <person name="Kamiya A."/>
            <person name="Meyers C."/>
            <person name="Nakajima M."/>
            <person name="Narusaka M."/>
            <person name="Seki M."/>
            <person name="Sakurai T."/>
            <person name="Satou M."/>
            <person name="Tamse R."/>
            <person name="Vaysberg M."/>
            <person name="Wallender E.K."/>
            <person name="Wong C."/>
            <person name="Yamamura Y."/>
            <person name="Yuan S."/>
            <person name="Shinozaki K."/>
            <person name="Davis R.W."/>
            <person name="Theologis A."/>
            <person name="Ecker J.R."/>
        </authorList>
    </citation>
    <scope>NUCLEOTIDE SEQUENCE [LARGE SCALE MRNA]</scope>
    <source>
        <strain>cv. Columbia</strain>
    </source>
</reference>
<reference key="5">
    <citation type="journal article" date="2012" name="Mol. Cell. Proteomics">
        <title>Comparative large-scale characterisation of plant vs. mammal proteins reveals similar and idiosyncratic N-alpha acetylation features.</title>
        <authorList>
            <person name="Bienvenut W.V."/>
            <person name="Sumpton D."/>
            <person name="Martinez A."/>
            <person name="Lilla S."/>
            <person name="Espagne C."/>
            <person name="Meinnel T."/>
            <person name="Giglione C."/>
        </authorList>
    </citation>
    <scope>ACETYLATION [LARGE SCALE ANALYSIS] AT ALA-46</scope>
    <scope>CLEAVAGE OF TRANSIT PEPTIDE [LARGE SCALE ANALYSIS] AFTER ARG-45</scope>
    <scope>IDENTIFICATION BY MASS SPECTROMETRY [LARGE SCALE ANALYSIS]</scope>
</reference>
<organism>
    <name type="scientific">Arabidopsis thaliana</name>
    <name type="common">Mouse-ear cress</name>
    <dbReference type="NCBI Taxonomy" id="3702"/>
    <lineage>
        <taxon>Eukaryota</taxon>
        <taxon>Viridiplantae</taxon>
        <taxon>Streptophyta</taxon>
        <taxon>Embryophyta</taxon>
        <taxon>Tracheophyta</taxon>
        <taxon>Spermatophyta</taxon>
        <taxon>Magnoliopsida</taxon>
        <taxon>eudicotyledons</taxon>
        <taxon>Gunneridae</taxon>
        <taxon>Pentapetalae</taxon>
        <taxon>rosids</taxon>
        <taxon>malvids</taxon>
        <taxon>Brassicales</taxon>
        <taxon>Brassicaceae</taxon>
        <taxon>Camelineae</taxon>
        <taxon>Arabidopsis</taxon>
    </lineage>
</organism>